<proteinExistence type="evidence at transcript level"/>
<comment type="function">
    <text evidence="2 3">Cytokine that acts as a ligand to CD40/TNFRSF5 (By similarity). Costimulates T-cell proliferation and cytokine production (By similarity). Its cross-linking on T-cells generates a costimulatory signal which enhances the production of IL4 and IL10 in conjunction with the TCR/CD3 ligation and CD28 costimulation (By similarity). Induces the activation of NF-kappa-B (By similarity). Induces the activation of kinases MAPK8 and PAK2 in T-cells (By similarity). Mediates B-cell proliferation in the absence of co-stimulus as well as IgE production in the presence of IL4 (By similarity). Involved in immunoglobulin class switching (By similarity).</text>
</comment>
<comment type="function">
    <molecule>CD40 ligand, soluble form</molecule>
    <text evidence="3">Acts as a ligand for integrins, specifically ITGA5:ITGB1 and ITGAV:ITGB3; both integrins and the CD40 receptor are required for activation of CD40-CD40LG signaling, which have cell-type dependent effects, such as B-cell activation, NF-kappa-B signaling and anti-apoptotic signaling.</text>
</comment>
<comment type="subunit">
    <text evidence="3">Homotrimer (By similarity). Interacts with CD28 (By similarity). CD40 ligand, soluble form: Exists as either a monomer or a homotrimer (By similarity). Forms a ternary complex between CD40 and integrins for CD40-CD40LG signaling (By similarity).</text>
</comment>
<comment type="subcellular location">
    <subcellularLocation>
        <location evidence="3">Cell membrane</location>
        <topology evidence="3">Single-pass type II membrane protein</topology>
    </subcellularLocation>
    <subcellularLocation>
        <location evidence="3">Cell surface</location>
    </subcellularLocation>
</comment>
<comment type="subcellular location">
    <molecule>CD40 ligand, soluble form</molecule>
    <subcellularLocation>
        <location evidence="3">Secreted</location>
    </subcellularLocation>
    <text evidence="3">Release of soluble CD40L from platelets is partially regulated by GP IIb/IIIa, actin polymerization, and a matrix metalloproteinases (MMP) inhibitor-sensitive pathway.</text>
</comment>
<comment type="PTM">
    <text evidence="3">The soluble form derives from the membrane form by proteolytic processing.</text>
</comment>
<comment type="similarity">
    <text evidence="6">Belongs to the tumor necrosis factor family.</text>
</comment>
<sequence length="261" mass="29243">MIETYSQPSPRSVATGPPVSMKIFMYLLTVFLITQMIGSALFAVYLHRRLDKIEDERNLHEDFVFMKTIQRCNKGEGSLSLLNCEEIRSRFEDLVKDIMQNKEVKKKEKNFEMHKGDQEPQIAAHVISEASSKTTSVLQWAPKGYYTLSNNLVTLENGKQLAVKRQGFYYIYTQVTFCSNRETLSQAPFIASLCLKSPSGSERILLRAANTHSSSKPCGQQSIHLGGVFELQSGASVFVNVTDPSQVSHGTGFTSFGLLKL</sequence>
<name>CD40L_BOVIN</name>
<keyword id="KW-1003">Cell membrane</keyword>
<keyword id="KW-0202">Cytokine</keyword>
<keyword id="KW-1015">Disulfide bond</keyword>
<keyword id="KW-0325">Glycoprotein</keyword>
<keyword id="KW-0472">Membrane</keyword>
<keyword id="KW-1185">Reference proteome</keyword>
<keyword id="KW-0964">Secreted</keyword>
<keyword id="KW-0735">Signal-anchor</keyword>
<keyword id="KW-0812">Transmembrane</keyword>
<keyword id="KW-1133">Transmembrane helix</keyword>
<protein>
    <recommendedName>
        <fullName>CD40 ligand</fullName>
        <shortName>CD40-L</shortName>
    </recommendedName>
    <alternativeName>
        <fullName>Tumor necrosis factor ligand superfamily member 5</fullName>
    </alternativeName>
    <cdAntigenName>CD154</cdAntigenName>
    <component>
        <recommendedName>
            <fullName>CD40 ligand, membrane form</fullName>
        </recommendedName>
    </component>
    <component>
        <recommendedName>
            <fullName evidence="2">CD40 ligand, soluble form</fullName>
            <shortName evidence="2">sCD40L</shortName>
        </recommendedName>
    </component>
</protein>
<evidence type="ECO:0000250" key="1"/>
<evidence type="ECO:0000250" key="2">
    <source>
        <dbReference type="UniProtKB" id="P27548"/>
    </source>
</evidence>
<evidence type="ECO:0000250" key="3">
    <source>
        <dbReference type="UniProtKB" id="P29965"/>
    </source>
</evidence>
<evidence type="ECO:0000255" key="4"/>
<evidence type="ECO:0000255" key="5">
    <source>
        <dbReference type="PROSITE-ProRule" id="PRU01387"/>
    </source>
</evidence>
<evidence type="ECO:0000305" key="6"/>
<accession>P51749</accession>
<reference key="1">
    <citation type="journal article" date="1995" name="Immunogenetics">
        <title>Cloning of two members of the TNF-superfamily in cattle: CD40 ligand and tumor necrosis factor alpha.</title>
        <authorList>
            <person name="Mertens B.E.L.C."/>
            <person name="Muriuki M."/>
            <person name="Gaidulis L."/>
        </authorList>
    </citation>
    <scope>NUCLEOTIDE SEQUENCE [MRNA]</scope>
    <source>
        <tissue>Blood</tissue>
    </source>
</reference>
<dbReference type="EMBL" id="Z48469">
    <property type="protein sequence ID" value="CAA88363.1"/>
    <property type="molecule type" value="mRNA"/>
</dbReference>
<dbReference type="PIR" id="S53090">
    <property type="entry name" value="S53090"/>
</dbReference>
<dbReference type="RefSeq" id="NP_777049.1">
    <property type="nucleotide sequence ID" value="NM_174624.2"/>
</dbReference>
<dbReference type="SMR" id="P51749"/>
<dbReference type="FunCoup" id="P51749">
    <property type="interactions" value="173"/>
</dbReference>
<dbReference type="STRING" id="9913.ENSBTAP00000023717"/>
<dbReference type="GlyCosmos" id="P51749">
    <property type="glycosylation" value="1 site, No reported glycans"/>
</dbReference>
<dbReference type="GlyGen" id="P51749">
    <property type="glycosylation" value="1 site"/>
</dbReference>
<dbReference type="PaxDb" id="9913-ENSBTAP00000056312"/>
<dbReference type="GeneID" id="282387"/>
<dbReference type="KEGG" id="bta:282387"/>
<dbReference type="CTD" id="959"/>
<dbReference type="eggNOG" id="KOG3656">
    <property type="taxonomic scope" value="Eukaryota"/>
</dbReference>
<dbReference type="HOGENOM" id="CLU_093203_0_0_1"/>
<dbReference type="InParanoid" id="P51749"/>
<dbReference type="OrthoDB" id="8667946at2759"/>
<dbReference type="Proteomes" id="UP000009136">
    <property type="component" value="Unplaced"/>
</dbReference>
<dbReference type="GO" id="GO:0009986">
    <property type="term" value="C:cell surface"/>
    <property type="evidence" value="ECO:0000250"/>
    <property type="project" value="UniProtKB"/>
</dbReference>
<dbReference type="GO" id="GO:0005615">
    <property type="term" value="C:extracellular space"/>
    <property type="evidence" value="ECO:0000318"/>
    <property type="project" value="GO_Central"/>
</dbReference>
<dbReference type="GO" id="GO:0005886">
    <property type="term" value="C:plasma membrane"/>
    <property type="evidence" value="ECO:0007669"/>
    <property type="project" value="UniProtKB-SubCell"/>
</dbReference>
<dbReference type="GO" id="GO:0005174">
    <property type="term" value="F:CD40 receptor binding"/>
    <property type="evidence" value="ECO:0000250"/>
    <property type="project" value="UniProtKB"/>
</dbReference>
<dbReference type="GO" id="GO:0005125">
    <property type="term" value="F:cytokine activity"/>
    <property type="evidence" value="ECO:0000318"/>
    <property type="project" value="GO_Central"/>
</dbReference>
<dbReference type="GO" id="GO:0043539">
    <property type="term" value="F:protein serine/threonine kinase activator activity"/>
    <property type="evidence" value="ECO:0000250"/>
    <property type="project" value="UniProtKB"/>
</dbReference>
<dbReference type="GO" id="GO:0005164">
    <property type="term" value="F:tumor necrosis factor receptor binding"/>
    <property type="evidence" value="ECO:0007669"/>
    <property type="project" value="InterPro"/>
</dbReference>
<dbReference type="GO" id="GO:0042100">
    <property type="term" value="P:B cell proliferation"/>
    <property type="evidence" value="ECO:0000250"/>
    <property type="project" value="UniProtKB"/>
</dbReference>
<dbReference type="GO" id="GO:0007166">
    <property type="term" value="P:cell surface receptor signaling pathway"/>
    <property type="evidence" value="ECO:0000318"/>
    <property type="project" value="GO_Central"/>
</dbReference>
<dbReference type="GO" id="GO:0006955">
    <property type="term" value="P:immune response"/>
    <property type="evidence" value="ECO:0007669"/>
    <property type="project" value="InterPro"/>
</dbReference>
<dbReference type="GO" id="GO:0006954">
    <property type="term" value="P:inflammatory response"/>
    <property type="evidence" value="ECO:0000250"/>
    <property type="project" value="UniProtKB"/>
</dbReference>
<dbReference type="GO" id="GO:0030168">
    <property type="term" value="P:platelet activation"/>
    <property type="evidence" value="ECO:0000250"/>
    <property type="project" value="UniProtKB"/>
</dbReference>
<dbReference type="GO" id="GO:0043123">
    <property type="term" value="P:positive regulation of canonical NF-kappaB signal transduction"/>
    <property type="evidence" value="ECO:0000318"/>
    <property type="project" value="GO_Central"/>
</dbReference>
<dbReference type="GO" id="GO:2001238">
    <property type="term" value="P:positive regulation of extrinsic apoptotic signaling pathway"/>
    <property type="evidence" value="ECO:0000318"/>
    <property type="project" value="GO_Central"/>
</dbReference>
<dbReference type="GO" id="GO:0032733">
    <property type="term" value="P:positive regulation of interleukin-10 production"/>
    <property type="evidence" value="ECO:0000250"/>
    <property type="project" value="UniProtKB"/>
</dbReference>
<dbReference type="GO" id="GO:0032753">
    <property type="term" value="P:positive regulation of interleukin-4 production"/>
    <property type="evidence" value="ECO:0000250"/>
    <property type="project" value="UniProtKB"/>
</dbReference>
<dbReference type="GO" id="GO:0051092">
    <property type="term" value="P:positive regulation of NF-kappaB transcription factor activity"/>
    <property type="evidence" value="ECO:0000250"/>
    <property type="project" value="UniProtKB"/>
</dbReference>
<dbReference type="GO" id="GO:0042102">
    <property type="term" value="P:positive regulation of T cell proliferation"/>
    <property type="evidence" value="ECO:0000250"/>
    <property type="project" value="UniProtKB"/>
</dbReference>
<dbReference type="CDD" id="cd00184">
    <property type="entry name" value="TNF"/>
    <property type="match status" value="1"/>
</dbReference>
<dbReference type="FunFam" id="2.60.120.40:FF:000013">
    <property type="entry name" value="CD40 ligand"/>
    <property type="match status" value="1"/>
</dbReference>
<dbReference type="Gene3D" id="2.60.120.40">
    <property type="match status" value="1"/>
</dbReference>
<dbReference type="InterPro" id="IPR003263">
    <property type="entry name" value="CD40L"/>
</dbReference>
<dbReference type="InterPro" id="IPR021184">
    <property type="entry name" value="TNF_CS"/>
</dbReference>
<dbReference type="InterPro" id="IPR006052">
    <property type="entry name" value="TNF_dom"/>
</dbReference>
<dbReference type="InterPro" id="IPR008983">
    <property type="entry name" value="Tumour_necrosis_fac-like_dom"/>
</dbReference>
<dbReference type="PANTHER" id="PTHR11471:SF5">
    <property type="entry name" value="CD40 LIGAND"/>
    <property type="match status" value="1"/>
</dbReference>
<dbReference type="PANTHER" id="PTHR11471">
    <property type="entry name" value="TUMOR NECROSIS FACTOR FAMILY MEMBER"/>
    <property type="match status" value="1"/>
</dbReference>
<dbReference type="Pfam" id="PF00229">
    <property type="entry name" value="TNF"/>
    <property type="match status" value="1"/>
</dbReference>
<dbReference type="PIRSF" id="PIRSF016527">
    <property type="entry name" value="TNF_5"/>
    <property type="match status" value="1"/>
</dbReference>
<dbReference type="PRINTS" id="PR01702">
    <property type="entry name" value="CD40LIGAND"/>
</dbReference>
<dbReference type="SMART" id="SM00207">
    <property type="entry name" value="TNF"/>
    <property type="match status" value="1"/>
</dbReference>
<dbReference type="SUPFAM" id="SSF49842">
    <property type="entry name" value="TNF-like"/>
    <property type="match status" value="1"/>
</dbReference>
<dbReference type="PROSITE" id="PS00251">
    <property type="entry name" value="THD_1"/>
    <property type="match status" value="1"/>
</dbReference>
<dbReference type="PROSITE" id="PS50049">
    <property type="entry name" value="THD_2"/>
    <property type="match status" value="1"/>
</dbReference>
<feature type="chain" id="PRO_0000034474" description="CD40 ligand, membrane form">
    <location>
        <begin position="1"/>
        <end position="261"/>
    </location>
</feature>
<feature type="chain" id="PRO_0000034475" description="CD40 ligand, soluble form" evidence="3">
    <location>
        <begin position="113"/>
        <end position="261"/>
    </location>
</feature>
<feature type="topological domain" description="Cytoplasmic" evidence="4">
    <location>
        <begin position="1"/>
        <end position="22"/>
    </location>
</feature>
<feature type="transmembrane region" description="Helical; Signal-anchor for type II membrane protein" evidence="4">
    <location>
        <begin position="23"/>
        <end position="46"/>
    </location>
</feature>
<feature type="topological domain" description="Extracellular" evidence="4">
    <location>
        <begin position="47"/>
        <end position="261"/>
    </location>
</feature>
<feature type="domain" description="THD" evidence="5">
    <location>
        <begin position="122"/>
        <end position="261"/>
    </location>
</feature>
<feature type="site" description="Cleavage" evidence="1">
    <location>
        <begin position="112"/>
        <end position="113"/>
    </location>
</feature>
<feature type="glycosylation site" description="N-linked (GlcNAc...) asparagine" evidence="4">
    <location>
        <position position="240"/>
    </location>
</feature>
<feature type="disulfide bond" evidence="5">
    <location>
        <begin position="178"/>
        <end position="218"/>
    </location>
</feature>
<organism>
    <name type="scientific">Bos taurus</name>
    <name type="common">Bovine</name>
    <dbReference type="NCBI Taxonomy" id="9913"/>
    <lineage>
        <taxon>Eukaryota</taxon>
        <taxon>Metazoa</taxon>
        <taxon>Chordata</taxon>
        <taxon>Craniata</taxon>
        <taxon>Vertebrata</taxon>
        <taxon>Euteleostomi</taxon>
        <taxon>Mammalia</taxon>
        <taxon>Eutheria</taxon>
        <taxon>Laurasiatheria</taxon>
        <taxon>Artiodactyla</taxon>
        <taxon>Ruminantia</taxon>
        <taxon>Pecora</taxon>
        <taxon>Bovidae</taxon>
        <taxon>Bovinae</taxon>
        <taxon>Bos</taxon>
    </lineage>
</organism>
<gene>
    <name type="primary">CD40LG</name>
    <name type="synonym">CD40L</name>
    <name type="synonym">TNFSF5</name>
</gene>